<accession>A8F2C5</accession>
<evidence type="ECO:0000255" key="1">
    <source>
        <dbReference type="HAMAP-Rule" id="MF_01315"/>
    </source>
</evidence>
<evidence type="ECO:0000305" key="2"/>
<name>RS13_RICM5</name>
<gene>
    <name evidence="1" type="primary">rpsM</name>
    <name type="ordered locus">RMA_1018</name>
</gene>
<organism>
    <name type="scientific">Rickettsia massiliae (strain Mtu5)</name>
    <dbReference type="NCBI Taxonomy" id="416276"/>
    <lineage>
        <taxon>Bacteria</taxon>
        <taxon>Pseudomonadati</taxon>
        <taxon>Pseudomonadota</taxon>
        <taxon>Alphaproteobacteria</taxon>
        <taxon>Rickettsiales</taxon>
        <taxon>Rickettsiaceae</taxon>
        <taxon>Rickettsieae</taxon>
        <taxon>Rickettsia</taxon>
        <taxon>spotted fever group</taxon>
    </lineage>
</organism>
<keyword id="KW-0687">Ribonucleoprotein</keyword>
<keyword id="KW-0689">Ribosomal protein</keyword>
<keyword id="KW-0694">RNA-binding</keyword>
<keyword id="KW-0699">rRNA-binding</keyword>
<keyword id="KW-0820">tRNA-binding</keyword>
<protein>
    <recommendedName>
        <fullName evidence="1">Small ribosomal subunit protein uS13</fullName>
    </recommendedName>
    <alternativeName>
        <fullName evidence="2">30S ribosomal protein S13</fullName>
    </alternativeName>
</protein>
<feature type="chain" id="PRO_1000067519" description="Small ribosomal subunit protein uS13">
    <location>
        <begin position="1"/>
        <end position="125"/>
    </location>
</feature>
<sequence length="125" mass="14159">MARIASVNIPDSKRLVVSLTYIYGLGPTMAAEICNKAKISKDKKVKELTDQELISLRNIIESEYKVEGDLRREVTLNIKKKKDIRCYQGLRHIRKLPVRGQNTHSNARTRKGKAIAIAGKKKTVK</sequence>
<proteinExistence type="inferred from homology"/>
<reference key="1">
    <citation type="journal article" date="2007" name="Genome Res.">
        <title>Lateral gene transfer between obligate intracellular bacteria: evidence from the Rickettsia massiliae genome.</title>
        <authorList>
            <person name="Blanc G."/>
            <person name="Ogata H."/>
            <person name="Robert C."/>
            <person name="Audic S."/>
            <person name="Claverie J.-M."/>
            <person name="Raoult D."/>
        </authorList>
    </citation>
    <scope>NUCLEOTIDE SEQUENCE [LARGE SCALE GENOMIC DNA]</scope>
    <source>
        <strain>Mtu5</strain>
    </source>
</reference>
<comment type="function">
    <text evidence="1">Located at the top of the head of the 30S subunit, it contacts several helices of the 16S rRNA. In the 70S ribosome it contacts the 23S rRNA (bridge B1a) and protein L5 of the 50S subunit (bridge B1b), connecting the 2 subunits; these bridges are implicated in subunit movement. Contacts the tRNAs in the A and P-sites.</text>
</comment>
<comment type="subunit">
    <text evidence="1">Part of the 30S ribosomal subunit. Forms a loose heterodimer with protein S19. Forms two bridges to the 50S subunit in the 70S ribosome.</text>
</comment>
<comment type="similarity">
    <text evidence="1">Belongs to the universal ribosomal protein uS13 family.</text>
</comment>
<dbReference type="EMBL" id="CP000683">
    <property type="protein sequence ID" value="ABV85061.1"/>
    <property type="molecule type" value="Genomic_DNA"/>
</dbReference>
<dbReference type="RefSeq" id="WP_012153027.1">
    <property type="nucleotide sequence ID" value="NC_009900.1"/>
</dbReference>
<dbReference type="SMR" id="A8F2C5"/>
<dbReference type="KEGG" id="rms:RMA_1018"/>
<dbReference type="HOGENOM" id="CLU_103849_1_2_5"/>
<dbReference type="Proteomes" id="UP000001311">
    <property type="component" value="Chromosome"/>
</dbReference>
<dbReference type="GO" id="GO:0005829">
    <property type="term" value="C:cytosol"/>
    <property type="evidence" value="ECO:0007669"/>
    <property type="project" value="TreeGrafter"/>
</dbReference>
<dbReference type="GO" id="GO:0015935">
    <property type="term" value="C:small ribosomal subunit"/>
    <property type="evidence" value="ECO:0007669"/>
    <property type="project" value="TreeGrafter"/>
</dbReference>
<dbReference type="GO" id="GO:0019843">
    <property type="term" value="F:rRNA binding"/>
    <property type="evidence" value="ECO:0007669"/>
    <property type="project" value="UniProtKB-UniRule"/>
</dbReference>
<dbReference type="GO" id="GO:0003735">
    <property type="term" value="F:structural constituent of ribosome"/>
    <property type="evidence" value="ECO:0007669"/>
    <property type="project" value="InterPro"/>
</dbReference>
<dbReference type="GO" id="GO:0000049">
    <property type="term" value="F:tRNA binding"/>
    <property type="evidence" value="ECO:0007669"/>
    <property type="project" value="UniProtKB-UniRule"/>
</dbReference>
<dbReference type="GO" id="GO:0006412">
    <property type="term" value="P:translation"/>
    <property type="evidence" value="ECO:0007669"/>
    <property type="project" value="UniProtKB-UniRule"/>
</dbReference>
<dbReference type="FunFam" id="1.10.8.50:FF:000001">
    <property type="entry name" value="30S ribosomal protein S13"/>
    <property type="match status" value="1"/>
</dbReference>
<dbReference type="Gene3D" id="1.10.8.50">
    <property type="match status" value="1"/>
</dbReference>
<dbReference type="Gene3D" id="4.10.910.10">
    <property type="entry name" value="30s ribosomal protein s13, domain 2"/>
    <property type="match status" value="1"/>
</dbReference>
<dbReference type="HAMAP" id="MF_01315">
    <property type="entry name" value="Ribosomal_uS13"/>
    <property type="match status" value="1"/>
</dbReference>
<dbReference type="InterPro" id="IPR027437">
    <property type="entry name" value="Rbsml_uS13_C"/>
</dbReference>
<dbReference type="InterPro" id="IPR001892">
    <property type="entry name" value="Ribosomal_uS13"/>
</dbReference>
<dbReference type="InterPro" id="IPR010979">
    <property type="entry name" value="Ribosomal_uS13-like_H2TH"/>
</dbReference>
<dbReference type="InterPro" id="IPR019980">
    <property type="entry name" value="Ribosomal_uS13_bac-type"/>
</dbReference>
<dbReference type="InterPro" id="IPR018269">
    <property type="entry name" value="Ribosomal_uS13_CS"/>
</dbReference>
<dbReference type="NCBIfam" id="TIGR03631">
    <property type="entry name" value="uS13_bact"/>
    <property type="match status" value="1"/>
</dbReference>
<dbReference type="PANTHER" id="PTHR10871">
    <property type="entry name" value="30S RIBOSOMAL PROTEIN S13/40S RIBOSOMAL PROTEIN S18"/>
    <property type="match status" value="1"/>
</dbReference>
<dbReference type="PANTHER" id="PTHR10871:SF1">
    <property type="entry name" value="SMALL RIBOSOMAL SUBUNIT PROTEIN US13M"/>
    <property type="match status" value="1"/>
</dbReference>
<dbReference type="Pfam" id="PF00416">
    <property type="entry name" value="Ribosomal_S13"/>
    <property type="match status" value="1"/>
</dbReference>
<dbReference type="PIRSF" id="PIRSF002134">
    <property type="entry name" value="Ribosomal_S13"/>
    <property type="match status" value="1"/>
</dbReference>
<dbReference type="SUPFAM" id="SSF46946">
    <property type="entry name" value="S13-like H2TH domain"/>
    <property type="match status" value="1"/>
</dbReference>
<dbReference type="PROSITE" id="PS00646">
    <property type="entry name" value="RIBOSOMAL_S13_1"/>
    <property type="match status" value="1"/>
</dbReference>
<dbReference type="PROSITE" id="PS50159">
    <property type="entry name" value="RIBOSOMAL_S13_2"/>
    <property type="match status" value="1"/>
</dbReference>